<feature type="chain" id="PRO_0000432243" description="4-hydroxyproline 2-epimerase">
    <location>
        <begin position="1"/>
        <end position="310"/>
    </location>
</feature>
<feature type="active site" description="Proton acceptor" evidence="4">
    <location>
        <position position="88"/>
    </location>
</feature>
<feature type="active site" description="Proton donor" evidence="4">
    <location>
        <position position="236"/>
    </location>
</feature>
<feature type="binding site" evidence="1">
    <location>
        <begin position="89"/>
        <end position="90"/>
    </location>
    <ligand>
        <name>substrate</name>
    </ligand>
</feature>
<feature type="binding site" evidence="1">
    <location>
        <position position="208"/>
    </location>
    <ligand>
        <name>substrate</name>
    </ligand>
</feature>
<feature type="binding site" evidence="1">
    <location>
        <position position="232"/>
    </location>
    <ligand>
        <name>substrate</name>
    </ligand>
</feature>
<feature type="binding site" evidence="1">
    <location>
        <begin position="237"/>
        <end position="238"/>
    </location>
    <ligand>
        <name>substrate</name>
    </ligand>
</feature>
<feature type="strand" evidence="6">
    <location>
        <begin position="2"/>
        <end position="11"/>
    </location>
</feature>
<feature type="strand" evidence="6">
    <location>
        <begin position="14"/>
        <end position="21"/>
    </location>
</feature>
<feature type="helix" evidence="6">
    <location>
        <begin position="31"/>
        <end position="50"/>
    </location>
</feature>
<feature type="turn" evidence="6">
    <location>
        <begin position="52"/>
        <end position="54"/>
    </location>
</feature>
<feature type="strand" evidence="6">
    <location>
        <begin position="60"/>
        <end position="65"/>
    </location>
</feature>
<feature type="strand" evidence="6">
    <location>
        <begin position="73"/>
        <end position="79"/>
    </location>
</feature>
<feature type="strand" evidence="6">
    <location>
        <begin position="81"/>
        <end position="84"/>
    </location>
</feature>
<feature type="helix" evidence="6">
    <location>
        <begin position="89"/>
        <end position="101"/>
    </location>
</feature>
<feature type="strand" evidence="6">
    <location>
        <begin position="107"/>
        <end position="114"/>
    </location>
</feature>
<feature type="strand" evidence="6">
    <location>
        <begin position="117"/>
        <end position="123"/>
    </location>
</feature>
<feature type="strand" evidence="6">
    <location>
        <begin position="129"/>
        <end position="132"/>
    </location>
</feature>
<feature type="strand" evidence="6">
    <location>
        <begin position="136"/>
        <end position="145"/>
    </location>
</feature>
<feature type="turn" evidence="7">
    <location>
        <begin position="148"/>
        <end position="150"/>
    </location>
</feature>
<feature type="strand" evidence="6">
    <location>
        <begin position="153"/>
        <end position="168"/>
    </location>
</feature>
<feature type="helix" evidence="6">
    <location>
        <begin position="176"/>
        <end position="178"/>
    </location>
</feature>
<feature type="helix" evidence="6">
    <location>
        <begin position="179"/>
        <end position="196"/>
    </location>
</feature>
<feature type="helix" evidence="6">
    <location>
        <begin position="201"/>
        <end position="203"/>
    </location>
</feature>
<feature type="strand" evidence="6">
    <location>
        <begin position="208"/>
        <end position="215"/>
    </location>
</feature>
<feature type="strand" evidence="6">
    <location>
        <begin position="218"/>
        <end position="225"/>
    </location>
</feature>
<feature type="helix" evidence="6">
    <location>
        <begin position="237"/>
        <end position="249"/>
    </location>
</feature>
<feature type="strand" evidence="6">
    <location>
        <begin position="259"/>
        <end position="262"/>
    </location>
</feature>
<feature type="strand" evidence="6">
    <location>
        <begin position="268"/>
        <end position="276"/>
    </location>
</feature>
<feature type="strand" evidence="6">
    <location>
        <begin position="279"/>
        <end position="286"/>
    </location>
</feature>
<feature type="strand" evidence="6">
    <location>
        <begin position="288"/>
        <end position="298"/>
    </location>
</feature>
<feature type="turn" evidence="6">
    <location>
        <begin position="303"/>
        <end position="306"/>
    </location>
</feature>
<organism>
    <name type="scientific">Pseudomonas fluorescens (strain ATCC BAA-477 / NRRL B-23932 / Pf-5)</name>
    <dbReference type="NCBI Taxonomy" id="220664"/>
    <lineage>
        <taxon>Bacteria</taxon>
        <taxon>Pseudomonadati</taxon>
        <taxon>Pseudomonadota</taxon>
        <taxon>Gammaproteobacteria</taxon>
        <taxon>Pseudomonadales</taxon>
        <taxon>Pseudomonadaceae</taxon>
        <taxon>Pseudomonas</taxon>
    </lineage>
</organism>
<reference key="1">
    <citation type="journal article" date="2005" name="Nat. Biotechnol.">
        <title>Complete genome sequence of the plant commensal Pseudomonas fluorescens Pf-5.</title>
        <authorList>
            <person name="Paulsen I.T."/>
            <person name="Press C.M."/>
            <person name="Ravel J."/>
            <person name="Kobayashi D.Y."/>
            <person name="Myers G.S.A."/>
            <person name="Mavrodi D.V."/>
            <person name="DeBoy R.T."/>
            <person name="Seshadri R."/>
            <person name="Ren Q."/>
            <person name="Madupu R."/>
            <person name="Dodson R.J."/>
            <person name="Durkin A.S."/>
            <person name="Brinkac L.M."/>
            <person name="Daugherty S.C."/>
            <person name="Sullivan S.A."/>
            <person name="Rosovitz M.J."/>
            <person name="Gwinn M.L."/>
            <person name="Zhou L."/>
            <person name="Schneider D.J."/>
            <person name="Cartinhour S.W."/>
            <person name="Nelson W.C."/>
            <person name="Weidman J."/>
            <person name="Watkins K."/>
            <person name="Tran K."/>
            <person name="Khouri H."/>
            <person name="Pierson E.A."/>
            <person name="Pierson L.S. III"/>
            <person name="Thomashow L.S."/>
            <person name="Loper J.E."/>
        </authorList>
    </citation>
    <scope>NUCLEOTIDE SEQUENCE [LARGE SCALE GENOMIC DNA]</scope>
    <source>
        <strain>ATCC BAA-477 / NRRL B-23932 / Pf-5</strain>
    </source>
</reference>
<reference key="2">
    <citation type="journal article" date="2014" name="Elife">
        <title>Prediction and characterization of enzymatic activities guided by sequence similarity and genome neighborhood networks.</title>
        <authorList>
            <person name="Zhao S."/>
            <person name="Sakai A."/>
            <person name="Zhang X."/>
            <person name="Vetting M.W."/>
            <person name="Kumar R."/>
            <person name="Hillerich B."/>
            <person name="San Francisco B."/>
            <person name="Solbiati J."/>
            <person name="Steves A."/>
            <person name="Brown S."/>
            <person name="Akiva E."/>
            <person name="Barber A."/>
            <person name="Seidel R.D."/>
            <person name="Babbitt P.C."/>
            <person name="Almo S.C."/>
            <person name="Gerlt J.A."/>
            <person name="Jacobson M.P."/>
        </authorList>
    </citation>
    <scope>X-RAY CRYSTALLOGRAPHY (1.60 ANGSTROMS) IN COMPLEXES WITH PYRROLE-2-CARBOXYLATE AND WITH TRANS-4-HYDROXY-L-PROLINE</scope>
    <scope>FUNCTION</scope>
    <scope>CATALYTIC ACTIVITY</scope>
    <scope>ACTIVE SITE</scope>
    <source>
        <strain>ATCC BAA-477 / NRRL B-23932 / Pf-5</strain>
    </source>
</reference>
<proteinExistence type="evidence at protein level"/>
<comment type="function">
    <text evidence="1">Catalyzes the epimerization of trans-4-hydroxy-L-proline (t4LHyp) to cis-4-hydroxy-D-proline (c4DHyp). Is likely involved in a degradation pathway that converts t4LHyp to alpha-ketoglutarate. Displays no proline racemase activity.</text>
</comment>
<comment type="catalytic activity">
    <reaction evidence="1">
        <text>trans-4-hydroxy-L-proline = cis-4-hydroxy-D-proline</text>
        <dbReference type="Rhea" id="RHEA:21152"/>
        <dbReference type="ChEBI" id="CHEBI:57690"/>
        <dbReference type="ChEBI" id="CHEBI:58375"/>
        <dbReference type="EC" id="5.1.1.8"/>
    </reaction>
</comment>
<comment type="similarity">
    <text evidence="3">Belongs to the proline racemase family.</text>
</comment>
<gene>
    <name evidence="5" type="ordered locus">PFL_1412</name>
</gene>
<protein>
    <recommendedName>
        <fullName evidence="2">4-hydroxyproline 2-epimerase</fullName>
        <shortName>4Hyp 2-epimerase</shortName>
        <shortName evidence="2">4HypE</shortName>
        <ecNumber evidence="1">5.1.1.8</ecNumber>
    </recommendedName>
</protein>
<dbReference type="EC" id="5.1.1.8" evidence="1"/>
<dbReference type="EMBL" id="CP000076">
    <property type="protein sequence ID" value="AAY90697.1"/>
    <property type="molecule type" value="Genomic_DNA"/>
</dbReference>
<dbReference type="RefSeq" id="WP_011059754.1">
    <property type="nucleotide sequence ID" value="NC_004129.6"/>
</dbReference>
<dbReference type="PDB" id="4J9W">
    <property type="method" value="X-ray"/>
    <property type="resolution" value="1.60 A"/>
    <property type="chains" value="A/B=1-310"/>
</dbReference>
<dbReference type="PDB" id="4J9X">
    <property type="method" value="X-ray"/>
    <property type="resolution" value="1.70 A"/>
    <property type="chains" value="A/B=1-310"/>
</dbReference>
<dbReference type="PDBsum" id="4J9W"/>
<dbReference type="PDBsum" id="4J9X"/>
<dbReference type="SMR" id="Q4KGU2"/>
<dbReference type="STRING" id="220664.PFL_1412"/>
<dbReference type="KEGG" id="pfl:PFL_1412"/>
<dbReference type="PATRIC" id="fig|220664.5.peg.1446"/>
<dbReference type="eggNOG" id="COG3938">
    <property type="taxonomic scope" value="Bacteria"/>
</dbReference>
<dbReference type="HOGENOM" id="CLU_036729_1_0_6"/>
<dbReference type="EvolutionaryTrace" id="Q4KGU2"/>
<dbReference type="Proteomes" id="UP000008540">
    <property type="component" value="Chromosome"/>
</dbReference>
<dbReference type="GO" id="GO:0047580">
    <property type="term" value="F:4-hydroxyproline epimerase activity"/>
    <property type="evidence" value="ECO:0007669"/>
    <property type="project" value="UniProtKB-EC"/>
</dbReference>
<dbReference type="FunFam" id="3.10.310.10:FF:000012">
    <property type="entry name" value="4-hydroxyproline 2-epimerase"/>
    <property type="match status" value="1"/>
</dbReference>
<dbReference type="Gene3D" id="3.10.310.10">
    <property type="entry name" value="Diaminopimelate Epimerase, Chain A, domain 1"/>
    <property type="match status" value="2"/>
</dbReference>
<dbReference type="InterPro" id="IPR008794">
    <property type="entry name" value="Pro_racemase_fam"/>
</dbReference>
<dbReference type="NCBIfam" id="NF010577">
    <property type="entry name" value="PRK13970.1"/>
    <property type="match status" value="1"/>
</dbReference>
<dbReference type="PANTHER" id="PTHR33442">
    <property type="entry name" value="TRANS-3-HYDROXY-L-PROLINE DEHYDRATASE"/>
    <property type="match status" value="1"/>
</dbReference>
<dbReference type="PANTHER" id="PTHR33442:SF1">
    <property type="entry name" value="TRANS-3-HYDROXY-L-PROLINE DEHYDRATASE"/>
    <property type="match status" value="1"/>
</dbReference>
<dbReference type="Pfam" id="PF05544">
    <property type="entry name" value="Pro_racemase"/>
    <property type="match status" value="1"/>
</dbReference>
<dbReference type="PIRSF" id="PIRSF029792">
    <property type="entry name" value="Pro_racemase"/>
    <property type="match status" value="1"/>
</dbReference>
<dbReference type="SFLD" id="SFLDS00028">
    <property type="entry name" value="Proline_Racemase"/>
    <property type="match status" value="1"/>
</dbReference>
<dbReference type="SUPFAM" id="SSF54506">
    <property type="entry name" value="Diaminopimelate epimerase-like"/>
    <property type="match status" value="1"/>
</dbReference>
<evidence type="ECO:0000269" key="1">
    <source>
    </source>
</evidence>
<evidence type="ECO:0000303" key="2">
    <source>
    </source>
</evidence>
<evidence type="ECO:0000305" key="3"/>
<evidence type="ECO:0000305" key="4">
    <source>
    </source>
</evidence>
<evidence type="ECO:0000312" key="5">
    <source>
        <dbReference type="EMBL" id="AAY90697.1"/>
    </source>
</evidence>
<evidence type="ECO:0007829" key="6">
    <source>
        <dbReference type="PDB" id="4J9W"/>
    </source>
</evidence>
<evidence type="ECO:0007829" key="7">
    <source>
        <dbReference type="PDB" id="4J9X"/>
    </source>
</evidence>
<accession>Q4KGU2</accession>
<name>4HYPE_PSEF5</name>
<sequence>MKKITVIDSHTGGEPTRLVIDGFPDLGRGSMAERLQILEREHDQWRRACVLEPRGSDVLVGALLCQPQAGDACAGVIFFNNSGYLGMCGHGTIGLVRSLYHLGRIDQGVHRIETPVGTVEATLHEDLSVSVRNVPAYRYRTQVMLQLPGHGKVHGDIAWGGNWFFLISDHGQRIALDNVEALTHYTRDVRQALEAAGITGAEGGVIDHIELFADDPQADSRNFVLCPGKAYDRSPCGTGTSAKLACLAADGKLAPGQAWRQASVIGSQFSAHYEKVGEQLIPILRGSAHISAEATLLLDDSDPFVWGIGS</sequence>
<keyword id="KW-0002">3D-structure</keyword>
<keyword id="KW-0413">Isomerase</keyword>